<comment type="function">
    <text evidence="1">Catalyzes the interconversion of ornithine to glutamate semialdehyde.</text>
</comment>
<comment type="catalytic activity">
    <reaction evidence="1">
        <text>a 2-oxocarboxylate + L-ornithine = L-glutamate 5-semialdehyde + an L-alpha-amino acid</text>
        <dbReference type="Rhea" id="RHEA:13877"/>
        <dbReference type="ChEBI" id="CHEBI:35179"/>
        <dbReference type="ChEBI" id="CHEBI:46911"/>
        <dbReference type="ChEBI" id="CHEBI:58066"/>
        <dbReference type="ChEBI" id="CHEBI:59869"/>
        <dbReference type="EC" id="2.6.1.13"/>
    </reaction>
</comment>
<comment type="cofactor">
    <cofactor evidence="1">
        <name>pyridoxal 5'-phosphate</name>
        <dbReference type="ChEBI" id="CHEBI:597326"/>
    </cofactor>
</comment>
<comment type="pathway">
    <text evidence="1">Amino-acid biosynthesis; L-proline biosynthesis; L-glutamate 5-semialdehyde from L-ornithine: step 1/1.</text>
</comment>
<comment type="subcellular location">
    <subcellularLocation>
        <location evidence="1">Cytoplasm</location>
    </subcellularLocation>
</comment>
<comment type="similarity">
    <text evidence="1">Belongs to the class-III pyridoxal-phosphate-dependent aminotransferase family. OAT subfamily.</text>
</comment>
<accession>Q8CT82</accession>
<protein>
    <recommendedName>
        <fullName evidence="1">Ornithine aminotransferase</fullName>
        <shortName evidence="1">OAT</shortName>
        <ecNumber evidence="1">2.6.1.13</ecNumber>
    </recommendedName>
    <alternativeName>
        <fullName evidence="1">Ornithine--oxo-acid aminotransferase</fullName>
    </alternativeName>
</protein>
<gene>
    <name evidence="1" type="primary">rocD</name>
    <name type="ordered locus">SE_0653</name>
</gene>
<organism>
    <name type="scientific">Staphylococcus epidermidis (strain ATCC 12228 / FDA PCI 1200)</name>
    <dbReference type="NCBI Taxonomy" id="176280"/>
    <lineage>
        <taxon>Bacteria</taxon>
        <taxon>Bacillati</taxon>
        <taxon>Bacillota</taxon>
        <taxon>Bacilli</taxon>
        <taxon>Bacillales</taxon>
        <taxon>Staphylococcaceae</taxon>
        <taxon>Staphylococcus</taxon>
    </lineage>
</organism>
<keyword id="KW-0028">Amino-acid biosynthesis</keyword>
<keyword id="KW-0032">Aminotransferase</keyword>
<keyword id="KW-0963">Cytoplasm</keyword>
<keyword id="KW-0641">Proline biosynthesis</keyword>
<keyword id="KW-0663">Pyridoxal phosphate</keyword>
<keyword id="KW-0808">Transferase</keyword>
<evidence type="ECO:0000255" key="1">
    <source>
        <dbReference type="HAMAP-Rule" id="MF_01689"/>
    </source>
</evidence>
<proteinExistence type="inferred from homology"/>
<reference key="1">
    <citation type="journal article" date="2003" name="Mol. Microbiol.">
        <title>Genome-based analysis of virulence genes in a non-biofilm-forming Staphylococcus epidermidis strain (ATCC 12228).</title>
        <authorList>
            <person name="Zhang Y.-Q."/>
            <person name="Ren S.-X."/>
            <person name="Li H.-L."/>
            <person name="Wang Y.-X."/>
            <person name="Fu G."/>
            <person name="Yang J."/>
            <person name="Qin Z.-Q."/>
            <person name="Miao Y.-G."/>
            <person name="Wang W.-Y."/>
            <person name="Chen R.-S."/>
            <person name="Shen Y."/>
            <person name="Chen Z."/>
            <person name="Yuan Z.-H."/>
            <person name="Zhao G.-P."/>
            <person name="Qu D."/>
            <person name="Danchin A."/>
            <person name="Wen Y.-M."/>
        </authorList>
    </citation>
    <scope>NUCLEOTIDE SEQUENCE [LARGE SCALE GENOMIC DNA]</scope>
    <source>
        <strain>ATCC 12228 / FDA PCI 1200</strain>
    </source>
</reference>
<name>OAT_STAES</name>
<dbReference type="EC" id="2.6.1.13" evidence="1"/>
<dbReference type="EMBL" id="AE015929">
    <property type="protein sequence ID" value="AAO04250.1"/>
    <property type="molecule type" value="Genomic_DNA"/>
</dbReference>
<dbReference type="RefSeq" id="NP_764208.1">
    <property type="nucleotide sequence ID" value="NC_004461.1"/>
</dbReference>
<dbReference type="RefSeq" id="WP_002485889.1">
    <property type="nucleotide sequence ID" value="NC_004461.1"/>
</dbReference>
<dbReference type="SMR" id="Q8CT82"/>
<dbReference type="KEGG" id="sep:SE_0653"/>
<dbReference type="PATRIC" id="fig|176280.10.peg.627"/>
<dbReference type="eggNOG" id="COG4992">
    <property type="taxonomic scope" value="Bacteria"/>
</dbReference>
<dbReference type="HOGENOM" id="CLU_016922_10_3_9"/>
<dbReference type="OrthoDB" id="9807885at2"/>
<dbReference type="UniPathway" id="UPA00098">
    <property type="reaction ID" value="UER00358"/>
</dbReference>
<dbReference type="Proteomes" id="UP000001411">
    <property type="component" value="Chromosome"/>
</dbReference>
<dbReference type="GO" id="GO:0005737">
    <property type="term" value="C:cytoplasm"/>
    <property type="evidence" value="ECO:0007669"/>
    <property type="project" value="UniProtKB-SubCell"/>
</dbReference>
<dbReference type="GO" id="GO:0042802">
    <property type="term" value="F:identical protein binding"/>
    <property type="evidence" value="ECO:0007669"/>
    <property type="project" value="TreeGrafter"/>
</dbReference>
<dbReference type="GO" id="GO:0004587">
    <property type="term" value="F:ornithine aminotransferase activity"/>
    <property type="evidence" value="ECO:0007669"/>
    <property type="project" value="UniProtKB-UniRule"/>
</dbReference>
<dbReference type="GO" id="GO:0030170">
    <property type="term" value="F:pyridoxal phosphate binding"/>
    <property type="evidence" value="ECO:0007669"/>
    <property type="project" value="UniProtKB-UniRule"/>
</dbReference>
<dbReference type="GO" id="GO:0055129">
    <property type="term" value="P:L-proline biosynthetic process"/>
    <property type="evidence" value="ECO:0007669"/>
    <property type="project" value="UniProtKB-UniRule"/>
</dbReference>
<dbReference type="CDD" id="cd00610">
    <property type="entry name" value="OAT_like"/>
    <property type="match status" value="1"/>
</dbReference>
<dbReference type="FunFam" id="3.40.640.10:FF:000011">
    <property type="entry name" value="Ornithine aminotransferase"/>
    <property type="match status" value="1"/>
</dbReference>
<dbReference type="Gene3D" id="3.90.1150.10">
    <property type="entry name" value="Aspartate Aminotransferase, domain 1"/>
    <property type="match status" value="1"/>
</dbReference>
<dbReference type="Gene3D" id="3.40.640.10">
    <property type="entry name" value="Type I PLP-dependent aspartate aminotransferase-like (Major domain)"/>
    <property type="match status" value="1"/>
</dbReference>
<dbReference type="HAMAP" id="MF_01689">
    <property type="entry name" value="Ornith_aminotrans_3"/>
    <property type="match status" value="1"/>
</dbReference>
<dbReference type="InterPro" id="IPR005814">
    <property type="entry name" value="Aminotrans_3"/>
</dbReference>
<dbReference type="InterPro" id="IPR049704">
    <property type="entry name" value="Aminotrans_3_PPA_site"/>
</dbReference>
<dbReference type="InterPro" id="IPR050103">
    <property type="entry name" value="Class-III_PLP-dep_AT"/>
</dbReference>
<dbReference type="InterPro" id="IPR010164">
    <property type="entry name" value="Orn_aminotrans"/>
</dbReference>
<dbReference type="InterPro" id="IPR034757">
    <property type="entry name" value="Ornith_aminotrans_bact"/>
</dbReference>
<dbReference type="InterPro" id="IPR015424">
    <property type="entry name" value="PyrdxlP-dep_Trfase"/>
</dbReference>
<dbReference type="InterPro" id="IPR015421">
    <property type="entry name" value="PyrdxlP-dep_Trfase_major"/>
</dbReference>
<dbReference type="InterPro" id="IPR015422">
    <property type="entry name" value="PyrdxlP-dep_Trfase_small"/>
</dbReference>
<dbReference type="NCBIfam" id="TIGR01885">
    <property type="entry name" value="Orn_aminotrans"/>
    <property type="match status" value="1"/>
</dbReference>
<dbReference type="NCBIfam" id="NF002325">
    <property type="entry name" value="PRK01278.1"/>
    <property type="match status" value="1"/>
</dbReference>
<dbReference type="NCBIfam" id="NF003145">
    <property type="entry name" value="PRK04073.1"/>
    <property type="match status" value="1"/>
</dbReference>
<dbReference type="PANTHER" id="PTHR11986">
    <property type="entry name" value="AMINOTRANSFERASE CLASS III"/>
    <property type="match status" value="1"/>
</dbReference>
<dbReference type="PANTHER" id="PTHR11986:SF18">
    <property type="entry name" value="ORNITHINE AMINOTRANSFERASE, MITOCHONDRIAL"/>
    <property type="match status" value="1"/>
</dbReference>
<dbReference type="Pfam" id="PF00202">
    <property type="entry name" value="Aminotran_3"/>
    <property type="match status" value="1"/>
</dbReference>
<dbReference type="PIRSF" id="PIRSF000521">
    <property type="entry name" value="Transaminase_4ab_Lys_Orn"/>
    <property type="match status" value="1"/>
</dbReference>
<dbReference type="SUPFAM" id="SSF53383">
    <property type="entry name" value="PLP-dependent transferases"/>
    <property type="match status" value="1"/>
</dbReference>
<dbReference type="PROSITE" id="PS00600">
    <property type="entry name" value="AA_TRANSFER_CLASS_3"/>
    <property type="match status" value="1"/>
</dbReference>
<sequence>MTQSEKIINLTNHYGAHNYVPLPIVISEAEGVWVKDPEGNTYMDMLSAYSAVNQGHRHPRIIQALKDQADKVTLVSRAFHSDNLGQWHEKICKLAGKDKALPMNTGAEAVETALKAARRWAYDVKGIEPNKAEIIAFNGNFHGRTMAPVSLSSEAEYQRGYGPLLEGFRKVEFGDVNQLKAAINKNTAAILVEPIQGEAGINVPPEGYLKTIRELCDEHQILFIADEIQAGLGRSGKLFATDWDHVKPDVYILGKALGGGVFPISVVLADNEVLDVFTPGSHGSTFGGNPLASAVSIAAIDVIIDEDLPGRSLELGEYFKSELKKIEHPSIKEVRGRGLFIGIELHESARPYCEALKEQGLLCKETHDTVIRFAPPLVITKEELDMALEKIKSVFA</sequence>
<feature type="chain" id="PRO_0000112792" description="Ornithine aminotransferase">
    <location>
        <begin position="1"/>
        <end position="396"/>
    </location>
</feature>
<feature type="modified residue" description="N6-(pyridoxal phosphate)lysine" evidence="1">
    <location>
        <position position="255"/>
    </location>
</feature>